<organism>
    <name type="scientific">Thermococcus onnurineus (strain NA1)</name>
    <dbReference type="NCBI Taxonomy" id="523850"/>
    <lineage>
        <taxon>Archaea</taxon>
        <taxon>Methanobacteriati</taxon>
        <taxon>Methanobacteriota</taxon>
        <taxon>Thermococci</taxon>
        <taxon>Thermococcales</taxon>
        <taxon>Thermococcaceae</taxon>
        <taxon>Thermococcus</taxon>
    </lineage>
</organism>
<keyword id="KW-0315">Glutamine amidotransferase</keyword>
<keyword id="KW-0378">Hydrolase</keyword>
<keyword id="KW-0456">Lyase</keyword>
<keyword id="KW-0663">Pyridoxal phosphate</keyword>
<dbReference type="EC" id="4.3.3.6" evidence="1"/>
<dbReference type="EC" id="3.5.1.2" evidence="1"/>
<dbReference type="EMBL" id="CP000855">
    <property type="protein sequence ID" value="ACJ17382.1"/>
    <property type="molecule type" value="Genomic_DNA"/>
</dbReference>
<dbReference type="RefSeq" id="WP_012572854.1">
    <property type="nucleotide sequence ID" value="NC_011529.1"/>
</dbReference>
<dbReference type="SMR" id="B6YVQ8"/>
<dbReference type="STRING" id="523850.TON_1891"/>
<dbReference type="MEROPS" id="C26.A32"/>
<dbReference type="GeneID" id="7017563"/>
<dbReference type="KEGG" id="ton:TON_1891"/>
<dbReference type="PATRIC" id="fig|523850.10.peg.1905"/>
<dbReference type="eggNOG" id="arCOG00034">
    <property type="taxonomic scope" value="Archaea"/>
</dbReference>
<dbReference type="HOGENOM" id="CLU_069674_2_0_2"/>
<dbReference type="OrthoDB" id="26717at2157"/>
<dbReference type="UniPathway" id="UPA00245"/>
<dbReference type="Proteomes" id="UP000002727">
    <property type="component" value="Chromosome"/>
</dbReference>
<dbReference type="GO" id="GO:0005829">
    <property type="term" value="C:cytosol"/>
    <property type="evidence" value="ECO:0007669"/>
    <property type="project" value="TreeGrafter"/>
</dbReference>
<dbReference type="GO" id="GO:1903600">
    <property type="term" value="C:glutaminase complex"/>
    <property type="evidence" value="ECO:0007669"/>
    <property type="project" value="TreeGrafter"/>
</dbReference>
<dbReference type="GO" id="GO:0004359">
    <property type="term" value="F:glutaminase activity"/>
    <property type="evidence" value="ECO:0007669"/>
    <property type="project" value="UniProtKB-UniRule"/>
</dbReference>
<dbReference type="GO" id="GO:0036381">
    <property type="term" value="F:pyridoxal 5'-phosphate synthase (glutamine hydrolysing) activity"/>
    <property type="evidence" value="ECO:0007669"/>
    <property type="project" value="UniProtKB-UniRule"/>
</dbReference>
<dbReference type="GO" id="GO:0006543">
    <property type="term" value="P:glutamine catabolic process"/>
    <property type="evidence" value="ECO:0007669"/>
    <property type="project" value="UniProtKB-UniRule"/>
</dbReference>
<dbReference type="GO" id="GO:0042823">
    <property type="term" value="P:pyridoxal phosphate biosynthetic process"/>
    <property type="evidence" value="ECO:0007669"/>
    <property type="project" value="UniProtKB-UniRule"/>
</dbReference>
<dbReference type="GO" id="GO:0008614">
    <property type="term" value="P:pyridoxine metabolic process"/>
    <property type="evidence" value="ECO:0007669"/>
    <property type="project" value="TreeGrafter"/>
</dbReference>
<dbReference type="CDD" id="cd01749">
    <property type="entry name" value="GATase1_PB"/>
    <property type="match status" value="1"/>
</dbReference>
<dbReference type="FunFam" id="3.40.50.880:FF:000041">
    <property type="entry name" value="Glutamine amidotransferase subunit pdxT, putative"/>
    <property type="match status" value="1"/>
</dbReference>
<dbReference type="Gene3D" id="3.40.50.880">
    <property type="match status" value="1"/>
</dbReference>
<dbReference type="HAMAP" id="MF_01615">
    <property type="entry name" value="PdxT"/>
    <property type="match status" value="1"/>
</dbReference>
<dbReference type="InterPro" id="IPR029062">
    <property type="entry name" value="Class_I_gatase-like"/>
</dbReference>
<dbReference type="InterPro" id="IPR002161">
    <property type="entry name" value="PdxT/SNO"/>
</dbReference>
<dbReference type="InterPro" id="IPR021196">
    <property type="entry name" value="PdxT/SNO_CS"/>
</dbReference>
<dbReference type="NCBIfam" id="TIGR03800">
    <property type="entry name" value="PLP_synth_Pdx2"/>
    <property type="match status" value="1"/>
</dbReference>
<dbReference type="PANTHER" id="PTHR31559">
    <property type="entry name" value="PYRIDOXAL 5'-PHOSPHATE SYNTHASE SUBUNIT SNO"/>
    <property type="match status" value="1"/>
</dbReference>
<dbReference type="PANTHER" id="PTHR31559:SF0">
    <property type="entry name" value="PYRIDOXAL 5'-PHOSPHATE SYNTHASE SUBUNIT SNO1-RELATED"/>
    <property type="match status" value="1"/>
</dbReference>
<dbReference type="Pfam" id="PF01174">
    <property type="entry name" value="SNO"/>
    <property type="match status" value="1"/>
</dbReference>
<dbReference type="PIRSF" id="PIRSF005639">
    <property type="entry name" value="Glut_amidoT_SNO"/>
    <property type="match status" value="1"/>
</dbReference>
<dbReference type="SUPFAM" id="SSF52317">
    <property type="entry name" value="Class I glutamine amidotransferase-like"/>
    <property type="match status" value="1"/>
</dbReference>
<dbReference type="PROSITE" id="PS01236">
    <property type="entry name" value="PDXT_SNO_1"/>
    <property type="match status" value="1"/>
</dbReference>
<dbReference type="PROSITE" id="PS51130">
    <property type="entry name" value="PDXT_SNO_2"/>
    <property type="match status" value="1"/>
</dbReference>
<reference key="1">
    <citation type="journal article" date="2008" name="J. Bacteriol.">
        <title>The complete genome sequence of Thermococcus onnurineus NA1 reveals a mixed heterotrophic and carboxydotrophic metabolism.</title>
        <authorList>
            <person name="Lee H.S."/>
            <person name="Kang S.G."/>
            <person name="Bae S.S."/>
            <person name="Lim J.K."/>
            <person name="Cho Y."/>
            <person name="Kim Y.J."/>
            <person name="Jeon J.H."/>
            <person name="Cha S.-S."/>
            <person name="Kwon K.K."/>
            <person name="Kim H.-T."/>
            <person name="Park C.-J."/>
            <person name="Lee H.-W."/>
            <person name="Kim S.I."/>
            <person name="Chun J."/>
            <person name="Colwell R.R."/>
            <person name="Kim S.-J."/>
            <person name="Lee J.-H."/>
        </authorList>
    </citation>
    <scope>NUCLEOTIDE SEQUENCE [LARGE SCALE GENOMIC DNA]</scope>
    <source>
        <strain>NA1</strain>
    </source>
</reference>
<evidence type="ECO:0000255" key="1">
    <source>
        <dbReference type="HAMAP-Rule" id="MF_01615"/>
    </source>
</evidence>
<protein>
    <recommendedName>
        <fullName evidence="1">Pyridoxal 5'-phosphate synthase subunit PdxT</fullName>
        <ecNumber evidence="1">4.3.3.6</ecNumber>
    </recommendedName>
    <alternativeName>
        <fullName evidence="1">Pdx2</fullName>
    </alternativeName>
    <alternativeName>
        <fullName evidence="1">Pyridoxal 5'-phosphate synthase glutaminase subunit</fullName>
        <ecNumber evidence="1">3.5.1.2</ecNumber>
    </alternativeName>
</protein>
<accession>B6YVQ8</accession>
<feature type="chain" id="PRO_1000185911" description="Pyridoxal 5'-phosphate synthase subunit PdxT">
    <location>
        <begin position="1"/>
        <end position="197"/>
    </location>
</feature>
<feature type="active site" description="Nucleophile" evidence="1">
    <location>
        <position position="85"/>
    </location>
</feature>
<feature type="active site" description="Charge relay system" evidence="1">
    <location>
        <position position="179"/>
    </location>
</feature>
<feature type="active site" description="Charge relay system" evidence="1">
    <location>
        <position position="181"/>
    </location>
</feature>
<feature type="binding site" evidence="1">
    <location>
        <begin position="53"/>
        <end position="55"/>
    </location>
    <ligand>
        <name>L-glutamine</name>
        <dbReference type="ChEBI" id="CHEBI:58359"/>
    </ligand>
</feature>
<feature type="binding site" evidence="1">
    <location>
        <position position="114"/>
    </location>
    <ligand>
        <name>L-glutamine</name>
        <dbReference type="ChEBI" id="CHEBI:58359"/>
    </ligand>
</feature>
<feature type="binding site" evidence="1">
    <location>
        <begin position="142"/>
        <end position="143"/>
    </location>
    <ligand>
        <name>L-glutamine</name>
        <dbReference type="ChEBI" id="CHEBI:58359"/>
    </ligand>
</feature>
<comment type="function">
    <text evidence="1">Catalyzes the hydrolysis of glutamine to glutamate and ammonia as part of the biosynthesis of pyridoxal 5'-phosphate. The resulting ammonia molecule is channeled to the active site of PdxS.</text>
</comment>
<comment type="catalytic activity">
    <reaction evidence="1">
        <text>aldehydo-D-ribose 5-phosphate + D-glyceraldehyde 3-phosphate + L-glutamine = pyridoxal 5'-phosphate + L-glutamate + phosphate + 3 H2O + H(+)</text>
        <dbReference type="Rhea" id="RHEA:31507"/>
        <dbReference type="ChEBI" id="CHEBI:15377"/>
        <dbReference type="ChEBI" id="CHEBI:15378"/>
        <dbReference type="ChEBI" id="CHEBI:29985"/>
        <dbReference type="ChEBI" id="CHEBI:43474"/>
        <dbReference type="ChEBI" id="CHEBI:58273"/>
        <dbReference type="ChEBI" id="CHEBI:58359"/>
        <dbReference type="ChEBI" id="CHEBI:59776"/>
        <dbReference type="ChEBI" id="CHEBI:597326"/>
        <dbReference type="EC" id="4.3.3.6"/>
    </reaction>
</comment>
<comment type="catalytic activity">
    <reaction evidence="1">
        <text>L-glutamine + H2O = L-glutamate + NH4(+)</text>
        <dbReference type="Rhea" id="RHEA:15889"/>
        <dbReference type="ChEBI" id="CHEBI:15377"/>
        <dbReference type="ChEBI" id="CHEBI:28938"/>
        <dbReference type="ChEBI" id="CHEBI:29985"/>
        <dbReference type="ChEBI" id="CHEBI:58359"/>
        <dbReference type="EC" id="3.5.1.2"/>
    </reaction>
</comment>
<comment type="pathway">
    <text evidence="1">Cofactor biosynthesis; pyridoxal 5'-phosphate biosynthesis.</text>
</comment>
<comment type="subunit">
    <text evidence="1">In the presence of PdxS, forms a dodecamer of heterodimers. Only shows activity in the heterodimer.</text>
</comment>
<comment type="similarity">
    <text evidence="1">Belongs to the glutaminase PdxT/SNO family.</text>
</comment>
<sequence>MLRVGVIGVQGAVSEHIEAVKRAFERLGVEGEAFWLRRPEQLNAIDAIILPGGESTTISRLMQKNGLFEPVKKLGEEGLPIMGTCAGLILLAKEVEGAVEGQRFLELLDVRVNRNAYGRQVDSFEAPLKLSFSDEPFPGVFIRAPKIVELLNDKVKPIAWHGDEVVGVEQGNIIGLAFHPELTDDARLHEYFLRKAL</sequence>
<name>PDXT_THEON</name>
<proteinExistence type="inferred from homology"/>
<gene>
    <name evidence="1" type="primary">pdxT</name>
    <name type="ordered locus">TON_1891</name>
</gene>